<proteinExistence type="inferred from homology"/>
<name>YIDD_THERP</name>
<organism>
    <name type="scientific">Thermomicrobium roseum (strain ATCC 27502 / DSM 5159 / P-2)</name>
    <dbReference type="NCBI Taxonomy" id="309801"/>
    <lineage>
        <taxon>Bacteria</taxon>
        <taxon>Pseudomonadati</taxon>
        <taxon>Thermomicrobiota</taxon>
        <taxon>Thermomicrobia</taxon>
        <taxon>Thermomicrobiales</taxon>
        <taxon>Thermomicrobiaceae</taxon>
        <taxon>Thermomicrobium</taxon>
    </lineage>
</organism>
<dbReference type="EMBL" id="CP001275">
    <property type="protein sequence ID" value="ACM05138.1"/>
    <property type="molecule type" value="Genomic_DNA"/>
</dbReference>
<dbReference type="RefSeq" id="WP_015922039.1">
    <property type="nucleotide sequence ID" value="NC_011959.1"/>
</dbReference>
<dbReference type="STRING" id="309801.trd_1086"/>
<dbReference type="KEGG" id="tro:trd_1086"/>
<dbReference type="eggNOG" id="COG0759">
    <property type="taxonomic scope" value="Bacteria"/>
</dbReference>
<dbReference type="HOGENOM" id="CLU_144811_6_0_0"/>
<dbReference type="OrthoDB" id="9801753at2"/>
<dbReference type="Proteomes" id="UP000000447">
    <property type="component" value="Chromosome"/>
</dbReference>
<dbReference type="GO" id="GO:0005886">
    <property type="term" value="C:plasma membrane"/>
    <property type="evidence" value="ECO:0007669"/>
    <property type="project" value="UniProtKB-SubCell"/>
</dbReference>
<dbReference type="HAMAP" id="MF_00386">
    <property type="entry name" value="UPF0161_YidD"/>
    <property type="match status" value="1"/>
</dbReference>
<dbReference type="InterPro" id="IPR002696">
    <property type="entry name" value="Membr_insert_effic_factor_YidD"/>
</dbReference>
<dbReference type="NCBIfam" id="TIGR00278">
    <property type="entry name" value="membrane protein insertion efficiency factor YidD"/>
    <property type="match status" value="1"/>
</dbReference>
<dbReference type="PANTHER" id="PTHR33383">
    <property type="entry name" value="MEMBRANE PROTEIN INSERTION EFFICIENCY FACTOR-RELATED"/>
    <property type="match status" value="1"/>
</dbReference>
<dbReference type="PANTHER" id="PTHR33383:SF1">
    <property type="entry name" value="MEMBRANE PROTEIN INSERTION EFFICIENCY FACTOR-RELATED"/>
    <property type="match status" value="1"/>
</dbReference>
<dbReference type="Pfam" id="PF01809">
    <property type="entry name" value="YidD"/>
    <property type="match status" value="1"/>
</dbReference>
<dbReference type="SMART" id="SM01234">
    <property type="entry name" value="Haemolytic"/>
    <property type="match status" value="1"/>
</dbReference>
<accession>B9L0L5</accession>
<comment type="function">
    <text evidence="1">Could be involved in insertion of integral membrane proteins into the membrane.</text>
</comment>
<comment type="subcellular location">
    <subcellularLocation>
        <location evidence="1">Cell membrane</location>
        <topology evidence="1">Peripheral membrane protein</topology>
        <orientation evidence="1">Cytoplasmic side</orientation>
    </subcellularLocation>
</comment>
<comment type="similarity">
    <text evidence="1">Belongs to the UPF0161 family.</text>
</comment>
<sequence length="69" mass="7874">MTKLALLLIRFYQRFISPGLPPACRFYPTCSEYGYEAISRYGIIKGGVLTVRRLLRCHPFHPGGYDPVP</sequence>
<keyword id="KW-1003">Cell membrane</keyword>
<keyword id="KW-0472">Membrane</keyword>
<keyword id="KW-1185">Reference proteome</keyword>
<gene>
    <name type="ordered locus">trd_1086</name>
</gene>
<reference key="1">
    <citation type="journal article" date="2009" name="PLoS ONE">
        <title>Complete genome sequence of the aerobic CO-oxidizing thermophile Thermomicrobium roseum.</title>
        <authorList>
            <person name="Wu D."/>
            <person name="Raymond J."/>
            <person name="Wu M."/>
            <person name="Chatterji S."/>
            <person name="Ren Q."/>
            <person name="Graham J.E."/>
            <person name="Bryant D.A."/>
            <person name="Robb F."/>
            <person name="Colman A."/>
            <person name="Tallon L.J."/>
            <person name="Badger J.H."/>
            <person name="Madupu R."/>
            <person name="Ward N.L."/>
            <person name="Eisen J.A."/>
        </authorList>
    </citation>
    <scope>NUCLEOTIDE SEQUENCE [LARGE SCALE GENOMIC DNA]</scope>
    <source>
        <strain>ATCC 27502 / DSM 5159 / P-2</strain>
    </source>
</reference>
<evidence type="ECO:0000255" key="1">
    <source>
        <dbReference type="HAMAP-Rule" id="MF_00386"/>
    </source>
</evidence>
<feature type="chain" id="PRO_1000197798" description="Putative membrane protein insertion efficiency factor">
    <location>
        <begin position="1"/>
        <end position="69"/>
    </location>
</feature>
<protein>
    <recommendedName>
        <fullName evidence="1">Putative membrane protein insertion efficiency factor</fullName>
    </recommendedName>
</protein>